<keyword id="KW-0456">Lyase</keyword>
<keyword id="KW-0460">Magnesium</keyword>
<keyword id="KW-0479">Metal-binding</keyword>
<keyword id="KW-1185">Reference proteome</keyword>
<protein>
    <recommendedName>
        <fullName evidence="1">2-keto-3-deoxy-L-rhamnonate aldolase</fullName>
        <shortName evidence="1">KDR aldolase</shortName>
        <ecNumber evidence="1">4.1.2.53</ecNumber>
    </recommendedName>
    <alternativeName>
        <fullName evidence="1">2-dehydro-3-deoxyrhamnonate aldolase</fullName>
    </alternativeName>
</protein>
<proteinExistence type="inferred from homology"/>
<comment type="function">
    <text evidence="1">Catalyzes the reversible retro-aldol cleavage of 2-keto-3-deoxy-L-rhamnonate (KDR) to pyruvate and lactaldehyde.</text>
</comment>
<comment type="catalytic activity">
    <reaction evidence="1">
        <text>2-dehydro-3-deoxy-L-rhamnonate = (S)-lactaldehyde + pyruvate</text>
        <dbReference type="Rhea" id="RHEA:25784"/>
        <dbReference type="ChEBI" id="CHEBI:15361"/>
        <dbReference type="ChEBI" id="CHEBI:18041"/>
        <dbReference type="ChEBI" id="CHEBI:58371"/>
        <dbReference type="EC" id="4.1.2.53"/>
    </reaction>
</comment>
<comment type="cofactor">
    <cofactor evidence="1">
        <name>Mg(2+)</name>
        <dbReference type="ChEBI" id="CHEBI:18420"/>
    </cofactor>
    <text evidence="1">Binds 1 Mg(2+) ion per subunit.</text>
</comment>
<comment type="subunit">
    <text evidence="1">Homohexamer.</text>
</comment>
<comment type="similarity">
    <text evidence="1">Belongs to the HpcH/HpaI aldolase family. KDR aldolase subfamily.</text>
</comment>
<gene>
    <name evidence="1" type="primary">rhmA</name>
    <name type="ordered locus">SSON_2306</name>
</gene>
<organism>
    <name type="scientific">Shigella sonnei (strain Ss046)</name>
    <dbReference type="NCBI Taxonomy" id="300269"/>
    <lineage>
        <taxon>Bacteria</taxon>
        <taxon>Pseudomonadati</taxon>
        <taxon>Pseudomonadota</taxon>
        <taxon>Gammaproteobacteria</taxon>
        <taxon>Enterobacterales</taxon>
        <taxon>Enterobacteriaceae</taxon>
        <taxon>Shigella</taxon>
    </lineage>
</organism>
<name>RHMA_SHISS</name>
<accession>Q3YZW1</accession>
<reference key="1">
    <citation type="journal article" date="2005" name="Nucleic Acids Res.">
        <title>Genome dynamics and diversity of Shigella species, the etiologic agents of bacillary dysentery.</title>
        <authorList>
            <person name="Yang F."/>
            <person name="Yang J."/>
            <person name="Zhang X."/>
            <person name="Chen L."/>
            <person name="Jiang Y."/>
            <person name="Yan Y."/>
            <person name="Tang X."/>
            <person name="Wang J."/>
            <person name="Xiong Z."/>
            <person name="Dong J."/>
            <person name="Xue Y."/>
            <person name="Zhu Y."/>
            <person name="Xu X."/>
            <person name="Sun L."/>
            <person name="Chen S."/>
            <person name="Nie H."/>
            <person name="Peng J."/>
            <person name="Xu J."/>
            <person name="Wang Y."/>
            <person name="Yuan Z."/>
            <person name="Wen Y."/>
            <person name="Yao Z."/>
            <person name="Shen Y."/>
            <person name="Qiang B."/>
            <person name="Hou Y."/>
            <person name="Yu J."/>
            <person name="Jin Q."/>
        </authorList>
    </citation>
    <scope>NUCLEOTIDE SEQUENCE [LARGE SCALE GENOMIC DNA]</scope>
    <source>
        <strain>Ss046</strain>
    </source>
</reference>
<sequence>MNALLTNPFKERLRKGEVQIGLWLSSTTSYMAEIAATSGYDWLLIDGEHAPNTIQDLYHQLQAVAPYASQPVIRPVEGSKSLIKQVLDIGAQTLLIPMVDTADQARQVASATRYPPYGERGVGASVARAARWGRIENYMAQVNDSLCLLVQVESKTALDNLDEILDVEGIDGVFIGPADLSASLGYPDNAGHPEVQRIIETSIRRIRAAGKAAGFLAVAPDMAQQCLAWGANFVAVGVDTMLYSDALDQRLAMFKSGKNGPRIKGSY</sequence>
<dbReference type="EC" id="4.1.2.53" evidence="1"/>
<dbReference type="EMBL" id="CP000038">
    <property type="protein sequence ID" value="AAZ88951.1"/>
    <property type="molecule type" value="Genomic_DNA"/>
</dbReference>
<dbReference type="SMR" id="Q3YZW1"/>
<dbReference type="KEGG" id="ssn:SSON_2306"/>
<dbReference type="HOGENOM" id="CLU_059964_1_0_6"/>
<dbReference type="Proteomes" id="UP000002529">
    <property type="component" value="Chromosome"/>
</dbReference>
<dbReference type="GO" id="GO:0005737">
    <property type="term" value="C:cytoplasm"/>
    <property type="evidence" value="ECO:0007669"/>
    <property type="project" value="TreeGrafter"/>
</dbReference>
<dbReference type="GO" id="GO:0106099">
    <property type="term" value="F:2-keto-3-deoxy-L-rhamnonate aldolase activity"/>
    <property type="evidence" value="ECO:0007669"/>
    <property type="project" value="UniProtKB-EC"/>
</dbReference>
<dbReference type="GO" id="GO:0000287">
    <property type="term" value="F:magnesium ion binding"/>
    <property type="evidence" value="ECO:0007669"/>
    <property type="project" value="UniProtKB-UniRule"/>
</dbReference>
<dbReference type="FunFam" id="3.20.20.60:FF:000004">
    <property type="entry name" value="5-keto-4-deoxy-D-glucarate aldolase"/>
    <property type="match status" value="1"/>
</dbReference>
<dbReference type="Gene3D" id="3.20.20.60">
    <property type="entry name" value="Phosphoenolpyruvate-binding domains"/>
    <property type="match status" value="1"/>
</dbReference>
<dbReference type="HAMAP" id="MF_01290">
    <property type="entry name" value="KDR_aldolase"/>
    <property type="match status" value="1"/>
</dbReference>
<dbReference type="InterPro" id="IPR005000">
    <property type="entry name" value="Aldolase/citrate-lyase_domain"/>
</dbReference>
<dbReference type="InterPro" id="IPR050251">
    <property type="entry name" value="HpcH-HpaI_aldolase"/>
</dbReference>
<dbReference type="InterPro" id="IPR023593">
    <property type="entry name" value="KDR_aldolase"/>
</dbReference>
<dbReference type="InterPro" id="IPR015813">
    <property type="entry name" value="Pyrv/PenolPyrv_kinase-like_dom"/>
</dbReference>
<dbReference type="InterPro" id="IPR040442">
    <property type="entry name" value="Pyrv_kinase-like_dom_sf"/>
</dbReference>
<dbReference type="NCBIfam" id="NF007521">
    <property type="entry name" value="PRK10128.1"/>
    <property type="match status" value="1"/>
</dbReference>
<dbReference type="PANTHER" id="PTHR30502">
    <property type="entry name" value="2-KETO-3-DEOXY-L-RHAMNONATE ALDOLASE"/>
    <property type="match status" value="1"/>
</dbReference>
<dbReference type="PANTHER" id="PTHR30502:SF5">
    <property type="entry name" value="2-KETO-3-DEOXY-L-RHAMNONATE ALDOLASE"/>
    <property type="match status" value="1"/>
</dbReference>
<dbReference type="Pfam" id="PF03328">
    <property type="entry name" value="HpcH_HpaI"/>
    <property type="match status" value="1"/>
</dbReference>
<dbReference type="SUPFAM" id="SSF51621">
    <property type="entry name" value="Phosphoenolpyruvate/pyruvate domain"/>
    <property type="match status" value="1"/>
</dbReference>
<evidence type="ECO:0000255" key="1">
    <source>
        <dbReference type="HAMAP-Rule" id="MF_01290"/>
    </source>
</evidence>
<feature type="chain" id="PRO_0000353180" description="2-keto-3-deoxy-L-rhamnonate aldolase">
    <location>
        <begin position="1"/>
        <end position="267"/>
    </location>
</feature>
<feature type="active site" description="Proton acceptor" evidence="1">
    <location>
        <position position="49"/>
    </location>
</feature>
<feature type="binding site" evidence="1">
    <location>
        <position position="151"/>
    </location>
    <ligand>
        <name>substrate</name>
    </ligand>
</feature>
<feature type="binding site" evidence="1">
    <location>
        <position position="153"/>
    </location>
    <ligand>
        <name>Mg(2+)</name>
        <dbReference type="ChEBI" id="CHEBI:18420"/>
    </ligand>
</feature>
<feature type="binding site" evidence="1">
    <location>
        <position position="178"/>
    </location>
    <ligand>
        <name>substrate</name>
    </ligand>
</feature>
<feature type="binding site" evidence="1">
    <location>
        <position position="179"/>
    </location>
    <ligand>
        <name>Mg(2+)</name>
        <dbReference type="ChEBI" id="CHEBI:18420"/>
    </ligand>
</feature>
<feature type="binding site" evidence="1">
    <location>
        <position position="179"/>
    </location>
    <ligand>
        <name>substrate</name>
    </ligand>
</feature>
<feature type="site" description="Transition state stabilizer" evidence="1">
    <location>
        <position position="74"/>
    </location>
</feature>
<feature type="site" description="Increases basicity of active site His" evidence="1">
    <location>
        <position position="88"/>
    </location>
</feature>